<proteinExistence type="inferred from homology"/>
<keyword id="KW-0687">Ribonucleoprotein</keyword>
<keyword id="KW-0689">Ribosomal protein</keyword>
<reference key="1">
    <citation type="journal article" date="2010" name="Genome Biol. Evol.">
        <title>Continuing evolution of Burkholderia mallei through genome reduction and large-scale rearrangements.</title>
        <authorList>
            <person name="Losada L."/>
            <person name="Ronning C.M."/>
            <person name="DeShazer D."/>
            <person name="Woods D."/>
            <person name="Fedorova N."/>
            <person name="Kim H.S."/>
            <person name="Shabalina S.A."/>
            <person name="Pearson T.R."/>
            <person name="Brinkac L."/>
            <person name="Tan P."/>
            <person name="Nandi T."/>
            <person name="Crabtree J."/>
            <person name="Badger J."/>
            <person name="Beckstrom-Sternberg S."/>
            <person name="Saqib M."/>
            <person name="Schutzer S.E."/>
            <person name="Keim P."/>
            <person name="Nierman W.C."/>
        </authorList>
    </citation>
    <scope>NUCLEOTIDE SEQUENCE [LARGE SCALE GENOMIC DNA]</scope>
    <source>
        <strain>1106a</strain>
    </source>
</reference>
<name>RL13_BURP0</name>
<dbReference type="EMBL" id="CP000572">
    <property type="protein sequence ID" value="ABN91579.1"/>
    <property type="molecule type" value="Genomic_DNA"/>
</dbReference>
<dbReference type="RefSeq" id="WP_004522094.1">
    <property type="nucleotide sequence ID" value="NC_009076.1"/>
</dbReference>
<dbReference type="SMR" id="A3NZ80"/>
<dbReference type="GeneID" id="93126851"/>
<dbReference type="KEGG" id="bpl:BURPS1106A_3414"/>
<dbReference type="HOGENOM" id="CLU_082184_2_2_4"/>
<dbReference type="Proteomes" id="UP000006738">
    <property type="component" value="Chromosome I"/>
</dbReference>
<dbReference type="GO" id="GO:0022625">
    <property type="term" value="C:cytosolic large ribosomal subunit"/>
    <property type="evidence" value="ECO:0007669"/>
    <property type="project" value="TreeGrafter"/>
</dbReference>
<dbReference type="GO" id="GO:0003729">
    <property type="term" value="F:mRNA binding"/>
    <property type="evidence" value="ECO:0007669"/>
    <property type="project" value="TreeGrafter"/>
</dbReference>
<dbReference type="GO" id="GO:0003735">
    <property type="term" value="F:structural constituent of ribosome"/>
    <property type="evidence" value="ECO:0007669"/>
    <property type="project" value="InterPro"/>
</dbReference>
<dbReference type="GO" id="GO:0017148">
    <property type="term" value="P:negative regulation of translation"/>
    <property type="evidence" value="ECO:0007669"/>
    <property type="project" value="TreeGrafter"/>
</dbReference>
<dbReference type="GO" id="GO:0006412">
    <property type="term" value="P:translation"/>
    <property type="evidence" value="ECO:0007669"/>
    <property type="project" value="UniProtKB-UniRule"/>
</dbReference>
<dbReference type="CDD" id="cd00392">
    <property type="entry name" value="Ribosomal_L13"/>
    <property type="match status" value="1"/>
</dbReference>
<dbReference type="FunFam" id="3.90.1180.10:FF:000001">
    <property type="entry name" value="50S ribosomal protein L13"/>
    <property type="match status" value="1"/>
</dbReference>
<dbReference type="Gene3D" id="3.90.1180.10">
    <property type="entry name" value="Ribosomal protein L13"/>
    <property type="match status" value="1"/>
</dbReference>
<dbReference type="HAMAP" id="MF_01366">
    <property type="entry name" value="Ribosomal_uL13"/>
    <property type="match status" value="1"/>
</dbReference>
<dbReference type="InterPro" id="IPR005822">
    <property type="entry name" value="Ribosomal_uL13"/>
</dbReference>
<dbReference type="InterPro" id="IPR005823">
    <property type="entry name" value="Ribosomal_uL13_bac-type"/>
</dbReference>
<dbReference type="InterPro" id="IPR036899">
    <property type="entry name" value="Ribosomal_uL13_sf"/>
</dbReference>
<dbReference type="NCBIfam" id="TIGR01066">
    <property type="entry name" value="rplM_bact"/>
    <property type="match status" value="1"/>
</dbReference>
<dbReference type="PANTHER" id="PTHR11545:SF2">
    <property type="entry name" value="LARGE RIBOSOMAL SUBUNIT PROTEIN UL13M"/>
    <property type="match status" value="1"/>
</dbReference>
<dbReference type="PANTHER" id="PTHR11545">
    <property type="entry name" value="RIBOSOMAL PROTEIN L13"/>
    <property type="match status" value="1"/>
</dbReference>
<dbReference type="Pfam" id="PF00572">
    <property type="entry name" value="Ribosomal_L13"/>
    <property type="match status" value="1"/>
</dbReference>
<dbReference type="PIRSF" id="PIRSF002181">
    <property type="entry name" value="Ribosomal_L13"/>
    <property type="match status" value="1"/>
</dbReference>
<dbReference type="SUPFAM" id="SSF52161">
    <property type="entry name" value="Ribosomal protein L13"/>
    <property type="match status" value="1"/>
</dbReference>
<comment type="function">
    <text evidence="1">This protein is one of the early assembly proteins of the 50S ribosomal subunit, although it is not seen to bind rRNA by itself. It is important during the early stages of 50S assembly.</text>
</comment>
<comment type="subunit">
    <text evidence="1">Part of the 50S ribosomal subunit.</text>
</comment>
<comment type="similarity">
    <text evidence="1">Belongs to the universal ribosomal protein uL13 family.</text>
</comment>
<sequence length="142" mass="15971">MKTFSAKAHEVTREWYVIDATDKVLGRVASEVARRLRGKHKPEFTPHVDTGDFIIVINASKLKVTGNKTLDKKYYRHSGYPGGIYETTFGKMQERFPGRALEKAVKGMLPKGPLGYAMIKKLKVYAEATHPHSAQQPKALEI</sequence>
<gene>
    <name evidence="1" type="primary">rplM</name>
    <name type="ordered locus">BURPS1106A_3414</name>
</gene>
<accession>A3NZ80</accession>
<protein>
    <recommendedName>
        <fullName evidence="1">Large ribosomal subunit protein uL13</fullName>
    </recommendedName>
    <alternativeName>
        <fullName evidence="2">50S ribosomal protein L13</fullName>
    </alternativeName>
</protein>
<feature type="chain" id="PRO_1000055358" description="Large ribosomal subunit protein uL13">
    <location>
        <begin position="1"/>
        <end position="142"/>
    </location>
</feature>
<organism>
    <name type="scientific">Burkholderia pseudomallei (strain 1106a)</name>
    <dbReference type="NCBI Taxonomy" id="357348"/>
    <lineage>
        <taxon>Bacteria</taxon>
        <taxon>Pseudomonadati</taxon>
        <taxon>Pseudomonadota</taxon>
        <taxon>Betaproteobacteria</taxon>
        <taxon>Burkholderiales</taxon>
        <taxon>Burkholderiaceae</taxon>
        <taxon>Burkholderia</taxon>
        <taxon>pseudomallei group</taxon>
    </lineage>
</organism>
<evidence type="ECO:0000255" key="1">
    <source>
        <dbReference type="HAMAP-Rule" id="MF_01366"/>
    </source>
</evidence>
<evidence type="ECO:0000305" key="2"/>